<reference key="1">
    <citation type="journal article" date="2006" name="J. Bacteriol.">
        <title>Comparative genomic evidence for a close relationship between the dimorphic prosthecate bacteria Hyphomonas neptunium and Caulobacter crescentus.</title>
        <authorList>
            <person name="Badger J.H."/>
            <person name="Hoover T.R."/>
            <person name="Brun Y.V."/>
            <person name="Weiner R.M."/>
            <person name="Laub M.T."/>
            <person name="Alexandre G."/>
            <person name="Mrazek J."/>
            <person name="Ren Q."/>
            <person name="Paulsen I.T."/>
            <person name="Nelson K.E."/>
            <person name="Khouri H.M."/>
            <person name="Radune D."/>
            <person name="Sosa J."/>
            <person name="Dodson R.J."/>
            <person name="Sullivan S.A."/>
            <person name="Rosovitz M.J."/>
            <person name="Madupu R."/>
            <person name="Brinkac L.M."/>
            <person name="Durkin A.S."/>
            <person name="Daugherty S.C."/>
            <person name="Kothari S.P."/>
            <person name="Giglio M.G."/>
            <person name="Zhou L."/>
            <person name="Haft D.H."/>
            <person name="Selengut J.D."/>
            <person name="Davidsen T.M."/>
            <person name="Yang Q."/>
            <person name="Zafar N."/>
            <person name="Ward N.L."/>
        </authorList>
    </citation>
    <scope>NUCLEOTIDE SEQUENCE [LARGE SCALE GENOMIC DNA]</scope>
    <source>
        <strain>ATCC 15444</strain>
    </source>
</reference>
<gene>
    <name evidence="1" type="primary">rpsS</name>
    <name type="ordered locus">HNE_2847</name>
</gene>
<comment type="function">
    <text evidence="1">Protein S19 forms a complex with S13 that binds strongly to the 16S ribosomal RNA.</text>
</comment>
<comment type="similarity">
    <text evidence="1">Belongs to the universal ribosomal protein uS19 family.</text>
</comment>
<dbReference type="EMBL" id="CP000158">
    <property type="protein sequence ID" value="ABI77446.1"/>
    <property type="molecule type" value="Genomic_DNA"/>
</dbReference>
<dbReference type="RefSeq" id="WP_011647822.1">
    <property type="nucleotide sequence ID" value="NC_008358.1"/>
</dbReference>
<dbReference type="SMR" id="Q0BYB8"/>
<dbReference type="STRING" id="228405.HNE_2847"/>
<dbReference type="KEGG" id="hne:HNE_2847"/>
<dbReference type="eggNOG" id="COG0185">
    <property type="taxonomic scope" value="Bacteria"/>
</dbReference>
<dbReference type="HOGENOM" id="CLU_144911_0_1_5"/>
<dbReference type="Proteomes" id="UP000001959">
    <property type="component" value="Chromosome"/>
</dbReference>
<dbReference type="GO" id="GO:0005737">
    <property type="term" value="C:cytoplasm"/>
    <property type="evidence" value="ECO:0007669"/>
    <property type="project" value="UniProtKB-ARBA"/>
</dbReference>
<dbReference type="GO" id="GO:0015935">
    <property type="term" value="C:small ribosomal subunit"/>
    <property type="evidence" value="ECO:0007669"/>
    <property type="project" value="InterPro"/>
</dbReference>
<dbReference type="GO" id="GO:0019843">
    <property type="term" value="F:rRNA binding"/>
    <property type="evidence" value="ECO:0007669"/>
    <property type="project" value="UniProtKB-UniRule"/>
</dbReference>
<dbReference type="GO" id="GO:0003735">
    <property type="term" value="F:structural constituent of ribosome"/>
    <property type="evidence" value="ECO:0007669"/>
    <property type="project" value="InterPro"/>
</dbReference>
<dbReference type="GO" id="GO:0000028">
    <property type="term" value="P:ribosomal small subunit assembly"/>
    <property type="evidence" value="ECO:0007669"/>
    <property type="project" value="TreeGrafter"/>
</dbReference>
<dbReference type="GO" id="GO:0006412">
    <property type="term" value="P:translation"/>
    <property type="evidence" value="ECO:0007669"/>
    <property type="project" value="UniProtKB-UniRule"/>
</dbReference>
<dbReference type="FunFam" id="3.30.860.10:FF:000001">
    <property type="entry name" value="30S ribosomal protein S19"/>
    <property type="match status" value="1"/>
</dbReference>
<dbReference type="Gene3D" id="3.30.860.10">
    <property type="entry name" value="30s Ribosomal Protein S19, Chain A"/>
    <property type="match status" value="1"/>
</dbReference>
<dbReference type="HAMAP" id="MF_00531">
    <property type="entry name" value="Ribosomal_uS19"/>
    <property type="match status" value="1"/>
</dbReference>
<dbReference type="InterPro" id="IPR002222">
    <property type="entry name" value="Ribosomal_uS19"/>
</dbReference>
<dbReference type="InterPro" id="IPR005732">
    <property type="entry name" value="Ribosomal_uS19_bac-type"/>
</dbReference>
<dbReference type="InterPro" id="IPR020934">
    <property type="entry name" value="Ribosomal_uS19_CS"/>
</dbReference>
<dbReference type="InterPro" id="IPR023575">
    <property type="entry name" value="Ribosomal_uS19_SF"/>
</dbReference>
<dbReference type="NCBIfam" id="TIGR01050">
    <property type="entry name" value="rpsS_bact"/>
    <property type="match status" value="1"/>
</dbReference>
<dbReference type="PANTHER" id="PTHR11880">
    <property type="entry name" value="RIBOSOMAL PROTEIN S19P FAMILY MEMBER"/>
    <property type="match status" value="1"/>
</dbReference>
<dbReference type="PANTHER" id="PTHR11880:SF8">
    <property type="entry name" value="SMALL RIBOSOMAL SUBUNIT PROTEIN US19M"/>
    <property type="match status" value="1"/>
</dbReference>
<dbReference type="Pfam" id="PF00203">
    <property type="entry name" value="Ribosomal_S19"/>
    <property type="match status" value="1"/>
</dbReference>
<dbReference type="PIRSF" id="PIRSF002144">
    <property type="entry name" value="Ribosomal_S19"/>
    <property type="match status" value="1"/>
</dbReference>
<dbReference type="PRINTS" id="PR00975">
    <property type="entry name" value="RIBOSOMALS19"/>
</dbReference>
<dbReference type="SUPFAM" id="SSF54570">
    <property type="entry name" value="Ribosomal protein S19"/>
    <property type="match status" value="1"/>
</dbReference>
<dbReference type="PROSITE" id="PS00323">
    <property type="entry name" value="RIBOSOMAL_S19"/>
    <property type="match status" value="1"/>
</dbReference>
<feature type="chain" id="PRO_0000265372" description="Small ribosomal subunit protein uS19">
    <location>
        <begin position="1"/>
        <end position="92"/>
    </location>
</feature>
<organism>
    <name type="scientific">Hyphomonas neptunium (strain ATCC 15444)</name>
    <dbReference type="NCBI Taxonomy" id="228405"/>
    <lineage>
        <taxon>Bacteria</taxon>
        <taxon>Pseudomonadati</taxon>
        <taxon>Pseudomonadota</taxon>
        <taxon>Alphaproteobacteria</taxon>
        <taxon>Hyphomonadales</taxon>
        <taxon>Hyphomonadaceae</taxon>
        <taxon>Hyphomonas</taxon>
    </lineage>
</organism>
<protein>
    <recommendedName>
        <fullName evidence="1">Small ribosomal subunit protein uS19</fullName>
    </recommendedName>
    <alternativeName>
        <fullName evidence="2">30S ribosomal protein S19</fullName>
    </alternativeName>
</protein>
<keyword id="KW-1185">Reference proteome</keyword>
<keyword id="KW-0687">Ribonucleoprotein</keyword>
<keyword id="KW-0689">Ribosomal protein</keyword>
<keyword id="KW-0694">RNA-binding</keyword>
<keyword id="KW-0699">rRNA-binding</keyword>
<evidence type="ECO:0000255" key="1">
    <source>
        <dbReference type="HAMAP-Rule" id="MF_00531"/>
    </source>
</evidence>
<evidence type="ECO:0000305" key="2"/>
<sequence length="92" mass="10481">MSRSVWKGPFVDGYLLKKAEEARSSEKRAVIKTWSRRSTILPQFVGLNFQVHNGNKFIPVTVTDEMVGHKLGEFAPTRTYYGHGADKKAKRK</sequence>
<accession>Q0BYB8</accession>
<proteinExistence type="inferred from homology"/>
<name>RS19_HYPNA</name>